<proteinExistence type="inferred from homology"/>
<comment type="function">
    <text evidence="1">Methylates ribosomal protein L11.</text>
</comment>
<comment type="catalytic activity">
    <reaction evidence="1">
        <text>L-lysyl-[protein] + 3 S-adenosyl-L-methionine = N(6),N(6),N(6)-trimethyl-L-lysyl-[protein] + 3 S-adenosyl-L-homocysteine + 3 H(+)</text>
        <dbReference type="Rhea" id="RHEA:54192"/>
        <dbReference type="Rhea" id="RHEA-COMP:9752"/>
        <dbReference type="Rhea" id="RHEA-COMP:13826"/>
        <dbReference type="ChEBI" id="CHEBI:15378"/>
        <dbReference type="ChEBI" id="CHEBI:29969"/>
        <dbReference type="ChEBI" id="CHEBI:57856"/>
        <dbReference type="ChEBI" id="CHEBI:59789"/>
        <dbReference type="ChEBI" id="CHEBI:61961"/>
    </reaction>
</comment>
<comment type="subcellular location">
    <subcellularLocation>
        <location evidence="1">Cytoplasm</location>
    </subcellularLocation>
</comment>
<comment type="similarity">
    <text evidence="1">Belongs to the methyltransferase superfamily. PrmA family.</text>
</comment>
<name>PRMA_BACTN</name>
<sequence length="280" mass="31658">MKYFEFTFHTSPCTETVNDVLAAVLGEAGFESFVESEGGLTAYIQQALCDENTIKNAITEFPLPDTEITYTYVEAEDKDWNEEWEKNFFQPIVIDNRCVIHSTFHKDVPQATYDIVINPQMAFGTGHHETTSLIIGELLDNELKDKSLLDMGCGTSILAILARMRGARPCIAIDIDEWCVRNSIENIELNHVDDIAVSQGDASSLVGKGPFDIIIANINRNILLNDMKQYVACMHPGSELYMSGFYVDDIPFIRREAEKNGLTFVHHKEKNRWAAVKFTY</sequence>
<protein>
    <recommendedName>
        <fullName evidence="1">Ribosomal protein L11 methyltransferase</fullName>
        <shortName evidence="1">L11 Mtase</shortName>
        <ecNumber evidence="1">2.1.1.-</ecNumber>
    </recommendedName>
</protein>
<reference key="1">
    <citation type="journal article" date="2003" name="Science">
        <title>A genomic view of the human-Bacteroides thetaiotaomicron symbiosis.</title>
        <authorList>
            <person name="Xu J."/>
            <person name="Bjursell M.K."/>
            <person name="Himrod J."/>
            <person name="Deng S."/>
            <person name="Carmichael L.K."/>
            <person name="Chiang H.C."/>
            <person name="Hooper L.V."/>
            <person name="Gordon J.I."/>
        </authorList>
    </citation>
    <scope>NUCLEOTIDE SEQUENCE [LARGE SCALE GENOMIC DNA]</scope>
    <source>
        <strain>ATCC 29148 / DSM 2079 / JCM 5827 / CCUG 10774 / NCTC 10582 / VPI-5482 / E50</strain>
    </source>
</reference>
<evidence type="ECO:0000255" key="1">
    <source>
        <dbReference type="HAMAP-Rule" id="MF_00735"/>
    </source>
</evidence>
<dbReference type="EC" id="2.1.1.-" evidence="1"/>
<dbReference type="EMBL" id="AE015928">
    <property type="protein sequence ID" value="AAO75421.1"/>
    <property type="molecule type" value="Genomic_DNA"/>
</dbReference>
<dbReference type="RefSeq" id="NP_809227.1">
    <property type="nucleotide sequence ID" value="NC_004663.1"/>
</dbReference>
<dbReference type="RefSeq" id="WP_008766150.1">
    <property type="nucleotide sequence ID" value="NC_004663.1"/>
</dbReference>
<dbReference type="SMR" id="Q8AAZ8"/>
<dbReference type="STRING" id="226186.BT_0314"/>
<dbReference type="PaxDb" id="226186-BT_0314"/>
<dbReference type="DNASU" id="1075493"/>
<dbReference type="EnsemblBacteria" id="AAO75421">
    <property type="protein sequence ID" value="AAO75421"/>
    <property type="gene ID" value="BT_0314"/>
</dbReference>
<dbReference type="GeneID" id="60926275"/>
<dbReference type="KEGG" id="bth:BT_0314"/>
<dbReference type="PATRIC" id="fig|226186.12.peg.314"/>
<dbReference type="eggNOG" id="COG2264">
    <property type="taxonomic scope" value="Bacteria"/>
</dbReference>
<dbReference type="HOGENOM" id="CLU_049382_0_0_10"/>
<dbReference type="InParanoid" id="Q8AAZ8"/>
<dbReference type="OrthoDB" id="9785995at2"/>
<dbReference type="Proteomes" id="UP000001414">
    <property type="component" value="Chromosome"/>
</dbReference>
<dbReference type="GO" id="GO:0005737">
    <property type="term" value="C:cytoplasm"/>
    <property type="evidence" value="ECO:0007669"/>
    <property type="project" value="UniProtKB-SubCell"/>
</dbReference>
<dbReference type="GO" id="GO:0008276">
    <property type="term" value="F:protein methyltransferase activity"/>
    <property type="evidence" value="ECO:0000318"/>
    <property type="project" value="GO_Central"/>
</dbReference>
<dbReference type="GO" id="GO:0016279">
    <property type="term" value="F:protein-lysine N-methyltransferase activity"/>
    <property type="evidence" value="ECO:0007669"/>
    <property type="project" value="RHEA"/>
</dbReference>
<dbReference type="GO" id="GO:0032259">
    <property type="term" value="P:methylation"/>
    <property type="evidence" value="ECO:0007669"/>
    <property type="project" value="UniProtKB-KW"/>
</dbReference>
<dbReference type="CDD" id="cd02440">
    <property type="entry name" value="AdoMet_MTases"/>
    <property type="match status" value="1"/>
</dbReference>
<dbReference type="Gene3D" id="3.40.50.150">
    <property type="entry name" value="Vaccinia Virus protein VP39"/>
    <property type="match status" value="1"/>
</dbReference>
<dbReference type="HAMAP" id="MF_00735">
    <property type="entry name" value="Methyltr_PrmA"/>
    <property type="match status" value="1"/>
</dbReference>
<dbReference type="InterPro" id="IPR050078">
    <property type="entry name" value="Ribosomal_L11_MeTrfase_PrmA"/>
</dbReference>
<dbReference type="InterPro" id="IPR004498">
    <property type="entry name" value="Ribosomal_PrmA_MeTrfase"/>
</dbReference>
<dbReference type="InterPro" id="IPR029063">
    <property type="entry name" value="SAM-dependent_MTases_sf"/>
</dbReference>
<dbReference type="NCBIfam" id="NF001785">
    <property type="entry name" value="PRK00517.2-2"/>
    <property type="match status" value="1"/>
</dbReference>
<dbReference type="PANTHER" id="PTHR43648">
    <property type="entry name" value="ELECTRON TRANSFER FLAVOPROTEIN BETA SUBUNIT LYSINE METHYLTRANSFERASE"/>
    <property type="match status" value="1"/>
</dbReference>
<dbReference type="PANTHER" id="PTHR43648:SF1">
    <property type="entry name" value="ELECTRON TRANSFER FLAVOPROTEIN BETA SUBUNIT LYSINE METHYLTRANSFERASE"/>
    <property type="match status" value="1"/>
</dbReference>
<dbReference type="Pfam" id="PF06325">
    <property type="entry name" value="PrmA"/>
    <property type="match status" value="1"/>
</dbReference>
<dbReference type="PIRSF" id="PIRSF000401">
    <property type="entry name" value="RPL11_MTase"/>
    <property type="match status" value="1"/>
</dbReference>
<dbReference type="SUPFAM" id="SSF53335">
    <property type="entry name" value="S-adenosyl-L-methionine-dependent methyltransferases"/>
    <property type="match status" value="1"/>
</dbReference>
<gene>
    <name evidence="1" type="primary">prmA</name>
    <name type="ordered locus">BT_0314</name>
</gene>
<accession>Q8AAZ8</accession>
<feature type="chain" id="PRO_0000192240" description="Ribosomal protein L11 methyltransferase">
    <location>
        <begin position="1"/>
        <end position="280"/>
    </location>
</feature>
<feature type="binding site" evidence="1">
    <location>
        <position position="131"/>
    </location>
    <ligand>
        <name>S-adenosyl-L-methionine</name>
        <dbReference type="ChEBI" id="CHEBI:59789"/>
    </ligand>
</feature>
<feature type="binding site" evidence="1">
    <location>
        <position position="152"/>
    </location>
    <ligand>
        <name>S-adenosyl-L-methionine</name>
        <dbReference type="ChEBI" id="CHEBI:59789"/>
    </ligand>
</feature>
<feature type="binding site" evidence="1">
    <location>
        <position position="174"/>
    </location>
    <ligand>
        <name>S-adenosyl-L-methionine</name>
        <dbReference type="ChEBI" id="CHEBI:59789"/>
    </ligand>
</feature>
<feature type="binding site" evidence="1">
    <location>
        <position position="217"/>
    </location>
    <ligand>
        <name>S-adenosyl-L-methionine</name>
        <dbReference type="ChEBI" id="CHEBI:59789"/>
    </ligand>
</feature>
<keyword id="KW-0963">Cytoplasm</keyword>
<keyword id="KW-0489">Methyltransferase</keyword>
<keyword id="KW-1185">Reference proteome</keyword>
<keyword id="KW-0949">S-adenosyl-L-methionine</keyword>
<keyword id="KW-0808">Transferase</keyword>
<organism>
    <name type="scientific">Bacteroides thetaiotaomicron (strain ATCC 29148 / DSM 2079 / JCM 5827 / CCUG 10774 / NCTC 10582 / VPI-5482 / E50)</name>
    <dbReference type="NCBI Taxonomy" id="226186"/>
    <lineage>
        <taxon>Bacteria</taxon>
        <taxon>Pseudomonadati</taxon>
        <taxon>Bacteroidota</taxon>
        <taxon>Bacteroidia</taxon>
        <taxon>Bacteroidales</taxon>
        <taxon>Bacteroidaceae</taxon>
        <taxon>Bacteroides</taxon>
    </lineage>
</organism>